<keyword id="KW-0025">Alternative splicing</keyword>
<keyword id="KW-0966">Cell projection</keyword>
<keyword id="KW-0968">Cytoplasmic vesicle</keyword>
<keyword id="KW-0539">Nucleus</keyword>
<keyword id="KW-1185">Reference proteome</keyword>
<keyword id="KW-0770">Synapse</keyword>
<dbReference type="EMBL" id="AE014296">
    <property type="protein sequence ID" value="AAF49370.2"/>
    <property type="molecule type" value="Genomic_DNA"/>
</dbReference>
<dbReference type="EMBL" id="AE014296">
    <property type="protein sequence ID" value="AAN11734.1"/>
    <property type="molecule type" value="Genomic_DNA"/>
</dbReference>
<dbReference type="EMBL" id="AY060379">
    <property type="protein sequence ID" value="AAL25418.1"/>
    <property type="molecule type" value="mRNA"/>
</dbReference>
<dbReference type="EMBL" id="BT023927">
    <property type="protein sequence ID" value="ABB36431.1"/>
    <property type="status" value="ALT_SEQ"/>
    <property type="molecule type" value="mRNA"/>
</dbReference>
<dbReference type="RefSeq" id="NP_648956.1">
    <molecule id="Q9VVE2-1"/>
    <property type="nucleotide sequence ID" value="NM_140699.3"/>
</dbReference>
<dbReference type="RefSeq" id="NP_730244.1">
    <molecule id="Q9VVE2-2"/>
    <property type="nucleotide sequence ID" value="NM_168717.2"/>
</dbReference>
<dbReference type="SMR" id="Q9VVE2"/>
<dbReference type="BioGRID" id="65209">
    <property type="interactions" value="14"/>
</dbReference>
<dbReference type="FunCoup" id="Q9VVE2">
    <property type="interactions" value="558"/>
</dbReference>
<dbReference type="IntAct" id="Q9VVE2">
    <property type="interactions" value="3"/>
</dbReference>
<dbReference type="STRING" id="7227.FBpp0075042"/>
<dbReference type="PaxDb" id="7227-FBpp0075042"/>
<dbReference type="DNASU" id="39917"/>
<dbReference type="EnsemblMetazoa" id="FBtr0075282">
    <molecule id="Q9VVE2-2"/>
    <property type="protein sequence ID" value="FBpp0075042"/>
    <property type="gene ID" value="FBgn0036697"/>
</dbReference>
<dbReference type="EnsemblMetazoa" id="FBtr0075283">
    <molecule id="Q9VVE2-1"/>
    <property type="protein sequence ID" value="FBpp0075043"/>
    <property type="gene ID" value="FBgn0036697"/>
</dbReference>
<dbReference type="GeneID" id="39917"/>
<dbReference type="KEGG" id="dme:Dmel_CG7725"/>
<dbReference type="UCSC" id="CG7725-RA">
    <molecule id="Q9VVE2-1"/>
    <property type="organism name" value="d. melanogaster"/>
</dbReference>
<dbReference type="AGR" id="FB:FBgn0036697"/>
<dbReference type="CTD" id="79641"/>
<dbReference type="FlyBase" id="FBgn0036697">
    <property type="gene designation" value="rogdi"/>
</dbReference>
<dbReference type="VEuPathDB" id="VectorBase:FBgn0036697"/>
<dbReference type="eggNOG" id="KOG3992">
    <property type="taxonomic scope" value="Eukaryota"/>
</dbReference>
<dbReference type="GeneTree" id="ENSGT00390000007164"/>
<dbReference type="HOGENOM" id="CLU_062094_0_0_1"/>
<dbReference type="InParanoid" id="Q9VVE2"/>
<dbReference type="OMA" id="NILMECA"/>
<dbReference type="OrthoDB" id="66510at2759"/>
<dbReference type="PhylomeDB" id="Q9VVE2"/>
<dbReference type="SignaLink" id="Q9VVE2"/>
<dbReference type="BioGRID-ORCS" id="39917">
    <property type="hits" value="0 hits in 1 CRISPR screen"/>
</dbReference>
<dbReference type="GenomeRNAi" id="39917"/>
<dbReference type="PRO" id="PR:Q9VVE2"/>
<dbReference type="Proteomes" id="UP000000803">
    <property type="component" value="Chromosome 3L"/>
</dbReference>
<dbReference type="Bgee" id="FBgn0036697">
    <property type="expression patterns" value="Expressed in fat body cell in dorsal vessel heart and 194 other cell types or tissues"/>
</dbReference>
<dbReference type="GO" id="GO:0030424">
    <property type="term" value="C:axon"/>
    <property type="evidence" value="ECO:0007669"/>
    <property type="project" value="UniProtKB-SubCell"/>
</dbReference>
<dbReference type="GO" id="GO:0030425">
    <property type="term" value="C:dendrite"/>
    <property type="evidence" value="ECO:0007669"/>
    <property type="project" value="UniProtKB-SubCell"/>
</dbReference>
<dbReference type="GO" id="GO:0005635">
    <property type="term" value="C:nuclear envelope"/>
    <property type="evidence" value="ECO:0007669"/>
    <property type="project" value="UniProtKB-SubCell"/>
</dbReference>
<dbReference type="GO" id="GO:0043204">
    <property type="term" value="C:perikaryon"/>
    <property type="evidence" value="ECO:0007669"/>
    <property type="project" value="UniProtKB-SubCell"/>
</dbReference>
<dbReference type="GO" id="GO:0043291">
    <property type="term" value="C:RAVE complex"/>
    <property type="evidence" value="ECO:0000318"/>
    <property type="project" value="GO_Central"/>
</dbReference>
<dbReference type="GO" id="GO:0008021">
    <property type="term" value="C:synaptic vesicle"/>
    <property type="evidence" value="ECO:0007669"/>
    <property type="project" value="UniProtKB-SubCell"/>
</dbReference>
<dbReference type="GO" id="GO:0048149">
    <property type="term" value="P:behavioral response to ethanol"/>
    <property type="evidence" value="ECO:0000315"/>
    <property type="project" value="FlyBase"/>
</dbReference>
<dbReference type="GO" id="GO:0061534">
    <property type="term" value="P:gamma-aminobutyric acid secretion, neurotransmission"/>
    <property type="evidence" value="ECO:0000315"/>
    <property type="project" value="UniProtKB"/>
</dbReference>
<dbReference type="GO" id="GO:0030431">
    <property type="term" value="P:sleep"/>
    <property type="evidence" value="ECO:0000315"/>
    <property type="project" value="UniProtKB"/>
</dbReference>
<dbReference type="InterPro" id="IPR028241">
    <property type="entry name" value="RAVE2/Rogdi"/>
</dbReference>
<dbReference type="PANTHER" id="PTHR13618">
    <property type="entry name" value="LEUCINE ZIPPER CONTAINING TRANSCRIPTION FACTOR LZF1"/>
    <property type="match status" value="1"/>
</dbReference>
<dbReference type="PANTHER" id="PTHR13618:SF1">
    <property type="entry name" value="PROTEIN ROGDI HOMOLOG"/>
    <property type="match status" value="1"/>
</dbReference>
<dbReference type="Pfam" id="PF10259">
    <property type="entry name" value="Rogdi_lz"/>
    <property type="match status" value="1"/>
</dbReference>
<name>ROGDI_DROME</name>
<evidence type="ECO:0000250" key="1">
    <source>
        <dbReference type="UniProtKB" id="Q4V7D2"/>
    </source>
</evidence>
<evidence type="ECO:0000250" key="2">
    <source>
        <dbReference type="UniProtKB" id="Q9GZN7"/>
    </source>
</evidence>
<evidence type="ECO:0000269" key="3">
    <source>
    </source>
</evidence>
<evidence type="ECO:0000303" key="4">
    <source ref="4"/>
</evidence>
<evidence type="ECO:0000305" key="5"/>
<organism>
    <name type="scientific">Drosophila melanogaster</name>
    <name type="common">Fruit fly</name>
    <dbReference type="NCBI Taxonomy" id="7227"/>
    <lineage>
        <taxon>Eukaryota</taxon>
        <taxon>Metazoa</taxon>
        <taxon>Ecdysozoa</taxon>
        <taxon>Arthropoda</taxon>
        <taxon>Hexapoda</taxon>
        <taxon>Insecta</taxon>
        <taxon>Pterygota</taxon>
        <taxon>Neoptera</taxon>
        <taxon>Endopterygota</taxon>
        <taxon>Diptera</taxon>
        <taxon>Brachycera</taxon>
        <taxon>Muscomorpha</taxon>
        <taxon>Ephydroidea</taxon>
        <taxon>Drosophilidae</taxon>
        <taxon>Drosophila</taxon>
        <taxon>Sophophora</taxon>
    </lineage>
</organism>
<proteinExistence type="evidence at protein level"/>
<gene>
    <name type="primary">rogdi</name>
    <name type="ORF">CG7725</name>
</gene>
<feature type="chain" id="PRO_0000315670" description="Protein rogdi">
    <location>
        <begin position="1"/>
        <end position="268"/>
    </location>
</feature>
<feature type="splice variant" id="VSP_030602" description="In isoform 2." evidence="4">
    <original>M</original>
    <variation>MAQSTTNNWSFQPLHRQRSTSGYPQHVLNTVPETAVLTTPPPTRKPLTIQIAGVAAAESGHKRRFLAARKKPKSAM</variation>
    <location>
        <position position="1"/>
    </location>
</feature>
<feature type="mutagenesis site" description="In rogdi(del); greatly reduced protein half-life; localization to distinct cytoplasmic inclusions; insomnia-like behaviors with sleep fragmentation and delay in sleep initiation in males and virgin females but not in mated females." evidence="3">
    <location>
        <begin position="16"/>
        <end position="83"/>
    </location>
</feature>
<feature type="sequence conflict" description="In Ref. 4; ABB36431." evidence="5" ref="4">
    <original>N</original>
    <variation>D</variation>
    <location>
        <position position="207"/>
    </location>
</feature>
<feature type="sequence conflict" description="In Ref. 4; ABB36431." evidence="5" ref="4">
    <original>M</original>
    <variation>V</variation>
    <location>
        <position position="234"/>
    </location>
</feature>
<reference key="1">
    <citation type="journal article" date="2000" name="Science">
        <title>The genome sequence of Drosophila melanogaster.</title>
        <authorList>
            <person name="Adams M.D."/>
            <person name="Celniker S.E."/>
            <person name="Holt R.A."/>
            <person name="Evans C.A."/>
            <person name="Gocayne J.D."/>
            <person name="Amanatides P.G."/>
            <person name="Scherer S.E."/>
            <person name="Li P.W."/>
            <person name="Hoskins R.A."/>
            <person name="Galle R.F."/>
            <person name="George R.A."/>
            <person name="Lewis S.E."/>
            <person name="Richards S."/>
            <person name="Ashburner M."/>
            <person name="Henderson S.N."/>
            <person name="Sutton G.G."/>
            <person name="Wortman J.R."/>
            <person name="Yandell M.D."/>
            <person name="Zhang Q."/>
            <person name="Chen L.X."/>
            <person name="Brandon R.C."/>
            <person name="Rogers Y.-H.C."/>
            <person name="Blazej R.G."/>
            <person name="Champe M."/>
            <person name="Pfeiffer B.D."/>
            <person name="Wan K.H."/>
            <person name="Doyle C."/>
            <person name="Baxter E.G."/>
            <person name="Helt G."/>
            <person name="Nelson C.R."/>
            <person name="Miklos G.L.G."/>
            <person name="Abril J.F."/>
            <person name="Agbayani A."/>
            <person name="An H.-J."/>
            <person name="Andrews-Pfannkoch C."/>
            <person name="Baldwin D."/>
            <person name="Ballew R.M."/>
            <person name="Basu A."/>
            <person name="Baxendale J."/>
            <person name="Bayraktaroglu L."/>
            <person name="Beasley E.M."/>
            <person name="Beeson K.Y."/>
            <person name="Benos P.V."/>
            <person name="Berman B.P."/>
            <person name="Bhandari D."/>
            <person name="Bolshakov S."/>
            <person name="Borkova D."/>
            <person name="Botchan M.R."/>
            <person name="Bouck J."/>
            <person name="Brokstein P."/>
            <person name="Brottier P."/>
            <person name="Burtis K.C."/>
            <person name="Busam D.A."/>
            <person name="Butler H."/>
            <person name="Cadieu E."/>
            <person name="Center A."/>
            <person name="Chandra I."/>
            <person name="Cherry J.M."/>
            <person name="Cawley S."/>
            <person name="Dahlke C."/>
            <person name="Davenport L.B."/>
            <person name="Davies P."/>
            <person name="de Pablos B."/>
            <person name="Delcher A."/>
            <person name="Deng Z."/>
            <person name="Mays A.D."/>
            <person name="Dew I."/>
            <person name="Dietz S.M."/>
            <person name="Dodson K."/>
            <person name="Doup L.E."/>
            <person name="Downes M."/>
            <person name="Dugan-Rocha S."/>
            <person name="Dunkov B.C."/>
            <person name="Dunn P."/>
            <person name="Durbin K.J."/>
            <person name="Evangelista C.C."/>
            <person name="Ferraz C."/>
            <person name="Ferriera S."/>
            <person name="Fleischmann W."/>
            <person name="Fosler C."/>
            <person name="Gabrielian A.E."/>
            <person name="Garg N.S."/>
            <person name="Gelbart W.M."/>
            <person name="Glasser K."/>
            <person name="Glodek A."/>
            <person name="Gong F."/>
            <person name="Gorrell J.H."/>
            <person name="Gu Z."/>
            <person name="Guan P."/>
            <person name="Harris M."/>
            <person name="Harris N.L."/>
            <person name="Harvey D.A."/>
            <person name="Heiman T.J."/>
            <person name="Hernandez J.R."/>
            <person name="Houck J."/>
            <person name="Hostin D."/>
            <person name="Houston K.A."/>
            <person name="Howland T.J."/>
            <person name="Wei M.-H."/>
            <person name="Ibegwam C."/>
            <person name="Jalali M."/>
            <person name="Kalush F."/>
            <person name="Karpen G.H."/>
            <person name="Ke Z."/>
            <person name="Kennison J.A."/>
            <person name="Ketchum K.A."/>
            <person name="Kimmel B.E."/>
            <person name="Kodira C.D."/>
            <person name="Kraft C.L."/>
            <person name="Kravitz S."/>
            <person name="Kulp D."/>
            <person name="Lai Z."/>
            <person name="Lasko P."/>
            <person name="Lei Y."/>
            <person name="Levitsky A.A."/>
            <person name="Li J.H."/>
            <person name="Li Z."/>
            <person name="Liang Y."/>
            <person name="Lin X."/>
            <person name="Liu X."/>
            <person name="Mattei B."/>
            <person name="McIntosh T.C."/>
            <person name="McLeod M.P."/>
            <person name="McPherson D."/>
            <person name="Merkulov G."/>
            <person name="Milshina N.V."/>
            <person name="Mobarry C."/>
            <person name="Morris J."/>
            <person name="Moshrefi A."/>
            <person name="Mount S.M."/>
            <person name="Moy M."/>
            <person name="Murphy B."/>
            <person name="Murphy L."/>
            <person name="Muzny D.M."/>
            <person name="Nelson D.L."/>
            <person name="Nelson D.R."/>
            <person name="Nelson K.A."/>
            <person name="Nixon K."/>
            <person name="Nusskern D.R."/>
            <person name="Pacleb J.M."/>
            <person name="Palazzolo M."/>
            <person name="Pittman G.S."/>
            <person name="Pan S."/>
            <person name="Pollard J."/>
            <person name="Puri V."/>
            <person name="Reese M.G."/>
            <person name="Reinert K."/>
            <person name="Remington K."/>
            <person name="Saunders R.D.C."/>
            <person name="Scheeler F."/>
            <person name="Shen H."/>
            <person name="Shue B.C."/>
            <person name="Siden-Kiamos I."/>
            <person name="Simpson M."/>
            <person name="Skupski M.P."/>
            <person name="Smith T.J."/>
            <person name="Spier E."/>
            <person name="Spradling A.C."/>
            <person name="Stapleton M."/>
            <person name="Strong R."/>
            <person name="Sun E."/>
            <person name="Svirskas R."/>
            <person name="Tector C."/>
            <person name="Turner R."/>
            <person name="Venter E."/>
            <person name="Wang A.H."/>
            <person name="Wang X."/>
            <person name="Wang Z.-Y."/>
            <person name="Wassarman D.A."/>
            <person name="Weinstock G.M."/>
            <person name="Weissenbach J."/>
            <person name="Williams S.M."/>
            <person name="Woodage T."/>
            <person name="Worley K.C."/>
            <person name="Wu D."/>
            <person name="Yang S."/>
            <person name="Yao Q.A."/>
            <person name="Ye J."/>
            <person name="Yeh R.-F."/>
            <person name="Zaveri J.S."/>
            <person name="Zhan M."/>
            <person name="Zhang G."/>
            <person name="Zhao Q."/>
            <person name="Zheng L."/>
            <person name="Zheng X.H."/>
            <person name="Zhong F.N."/>
            <person name="Zhong W."/>
            <person name="Zhou X."/>
            <person name="Zhu S.C."/>
            <person name="Zhu X."/>
            <person name="Smith H.O."/>
            <person name="Gibbs R.A."/>
            <person name="Myers E.W."/>
            <person name="Rubin G.M."/>
            <person name="Venter J.C."/>
        </authorList>
    </citation>
    <scope>NUCLEOTIDE SEQUENCE [LARGE SCALE GENOMIC DNA]</scope>
    <source>
        <strain>Berkeley</strain>
    </source>
</reference>
<reference key="2">
    <citation type="journal article" date="2002" name="Genome Biol.">
        <title>Annotation of the Drosophila melanogaster euchromatic genome: a systematic review.</title>
        <authorList>
            <person name="Misra S."/>
            <person name="Crosby M.A."/>
            <person name="Mungall C.J."/>
            <person name="Matthews B.B."/>
            <person name="Campbell K.S."/>
            <person name="Hradecky P."/>
            <person name="Huang Y."/>
            <person name="Kaminker J.S."/>
            <person name="Millburn G.H."/>
            <person name="Prochnik S.E."/>
            <person name="Smith C.D."/>
            <person name="Tupy J.L."/>
            <person name="Whitfield E.J."/>
            <person name="Bayraktaroglu L."/>
            <person name="Berman B.P."/>
            <person name="Bettencourt B.R."/>
            <person name="Celniker S.E."/>
            <person name="de Grey A.D.N.J."/>
            <person name="Drysdale R.A."/>
            <person name="Harris N.L."/>
            <person name="Richter J."/>
            <person name="Russo S."/>
            <person name="Schroeder A.J."/>
            <person name="Shu S.Q."/>
            <person name="Stapleton M."/>
            <person name="Yamada C."/>
            <person name="Ashburner M."/>
            <person name="Gelbart W.M."/>
            <person name="Rubin G.M."/>
            <person name="Lewis S.E."/>
        </authorList>
    </citation>
    <scope>GENOME REANNOTATION</scope>
    <source>
        <strain>Berkeley</strain>
    </source>
</reference>
<reference key="3">
    <citation type="journal article" date="2002" name="Genome Biol.">
        <title>A Drosophila full-length cDNA resource.</title>
        <authorList>
            <person name="Stapleton M."/>
            <person name="Carlson J.W."/>
            <person name="Brokstein P."/>
            <person name="Yu C."/>
            <person name="Champe M."/>
            <person name="George R.A."/>
            <person name="Guarin H."/>
            <person name="Kronmiller B."/>
            <person name="Pacleb J.M."/>
            <person name="Park S."/>
            <person name="Wan K.H."/>
            <person name="Rubin G.M."/>
            <person name="Celniker S.E."/>
        </authorList>
    </citation>
    <scope>NUCLEOTIDE SEQUENCE [LARGE SCALE MRNA] (ISOFORM 1)</scope>
    <source>
        <strain>Berkeley</strain>
        <tissue>Embryo</tissue>
    </source>
</reference>
<reference key="4">
    <citation type="submission" date="2005-10" db="EMBL/GenBank/DDBJ databases">
        <authorList>
            <person name="Stapleton M."/>
            <person name="Carlson J.W."/>
            <person name="Chavez C."/>
            <person name="Frise E."/>
            <person name="George R.A."/>
            <person name="Pacleb J.M."/>
            <person name="Park S."/>
            <person name="Wan K.H."/>
            <person name="Yu C."/>
            <person name="Celniker S.E."/>
        </authorList>
    </citation>
    <scope>NUCLEOTIDE SEQUENCE [LARGE SCALE MRNA] (ISOFORM 2)</scope>
    <source>
        <strain>Berkeley</strain>
        <tissue>Embryo</tissue>
    </source>
</reference>
<reference key="5">
    <citation type="journal article" date="2017" name="Sci. Rep.">
        <title>Rogdi Defines GABAergic Control of a Wake-promoting Dopaminergic Pathway to Sustain Sleep in Drosophila.</title>
        <authorList>
            <person name="Kim M."/>
            <person name="Jang D."/>
            <person name="Yoo E."/>
            <person name="Oh Y."/>
            <person name="Sonn J.Y."/>
            <person name="Lee J."/>
            <person name="Ki Y."/>
            <person name="Son H.J."/>
            <person name="Hwang O."/>
            <person name="Lee C."/>
            <person name="Lim C."/>
            <person name="Choe J."/>
        </authorList>
    </citation>
    <scope>FUNCTION</scope>
    <scope>TISSUE SPECIFICITY</scope>
    <scope>MUTAGENESIS OF 16-GLN--ALA-83</scope>
</reference>
<sequence>MKMLADTEREEALNLQIEFEWVLRQEVHAILKQLRSILVECAHRFPVPLYENEGKKTEKFILTVSPDQLKAVLTLTGDAITQADISFKLCKAPSQTQRTSITHDSPWKLQQVQDAANHLQTAINHIDDVDDSYHFKTSDEVLHVIGNILDALQRGRNSLLVPKKKPIDELIKGRNMKSLVPNLPEDLAVSFYLQSHKLIIAVYQLLNNQGTMRFDSRQAEASVQWLNDVLLLLMNGQKLCQQLKDKISVFSVYKDFTVGSRSPSALSY</sequence>
<accession>Q9VVE2</accession>
<accession>Q32KF2</accession>
<accession>Q8IQP4</accession>
<accession>Q95T16</accession>
<protein>
    <recommendedName>
        <fullName>Protein rogdi</fullName>
    </recommendedName>
</protein>
<comment type="function">
    <text evidence="3">Plays a role in promoting sleep by enhancing metabotropic transmission of the inhibitory neurotransmitter gamma-aminobutyric acid (GABA) in GABAergic neurons upstream of a wake-inducing dopaminergic pathway.</text>
</comment>
<comment type="subcellular location">
    <subcellularLocation>
        <location evidence="2">Nucleus envelope</location>
    </subcellularLocation>
    <subcellularLocation>
        <location evidence="1">Presynapse</location>
    </subcellularLocation>
    <subcellularLocation>
        <location evidence="1">Cell projection</location>
        <location evidence="1">Axon</location>
    </subcellularLocation>
    <subcellularLocation>
        <location evidence="1">Perikaryon</location>
    </subcellularLocation>
    <subcellularLocation>
        <location evidence="1">Cell projection</location>
        <location evidence="1">Dendrite</location>
    </subcellularLocation>
    <subcellularLocation>
        <location evidence="1">Cytoplasmic vesicle</location>
        <location evidence="1">Secretory vesicle</location>
        <location evidence="1">Synaptic vesicle</location>
    </subcellularLocation>
    <text evidence="1">Detected primarily at presynaptic sites on axons, and to a lesser degree in soma and dendrites. Not detected at post-synaptic sites.</text>
</comment>
<comment type="alternative products">
    <event type="alternative splicing"/>
    <isoform>
        <id>Q9VVE2-1</id>
        <name>1</name>
        <sequence type="displayed"/>
    </isoform>
    <isoform>
        <id>Q9VVE2-2</id>
        <name>2</name>
        <sequence type="described" ref="VSP_030602"/>
    </isoform>
</comment>
<comment type="tissue specificity">
    <text evidence="3">Expressed in both anterior and posterior regions of the brain including in GABAergic neurons.</text>
</comment>
<comment type="similarity">
    <text evidence="5">Belongs to the rogdi family.</text>
</comment>
<comment type="sequence caution" evidence="5">
    <conflict type="erroneous termination">
        <sequence resource="EMBL-CDS" id="ABB36431"/>
    </conflict>
    <text>Truncated C-terminus.</text>
</comment>